<sequence length="330" mass="35831">MQTLAQHLTSKAVNESLSQLILTLADTSKAISHAVRHGALAGVLGATEQENVQGETQKKLDIITNDMLKDALKADGTVRGLASEEEDHVVEVSANGQYLVCFDPLDGSSNIDINSLVGTIFSVLPAPAGELTETSFLQSGRNQLAAGYVLYGPSTMLALTTGQGVQLFTLHPETNEFLLTNAAMSISPDTQEFAINMSNQRFWEAPMQTYIADLLLGKIGPREKSFNMRWIAAMVGDVHRVLSRGGIFTYPTDNKDPKKPYKLRLMYEANPMALLVEQAGGKASTGYETILDIQPTQIHQRVAVILGSANEVDACLSYHGIDYSEEPTLD</sequence>
<dbReference type="EC" id="3.1.3.11" evidence="1"/>
<dbReference type="EMBL" id="CP000444">
    <property type="protein sequence ID" value="ABI44355.1"/>
    <property type="molecule type" value="Genomic_DNA"/>
</dbReference>
<dbReference type="SMR" id="Q0HRA0"/>
<dbReference type="KEGG" id="shm:Shewmr7_3373"/>
<dbReference type="HOGENOM" id="CLU_039977_0_0_6"/>
<dbReference type="UniPathway" id="UPA00138"/>
<dbReference type="GO" id="GO:0005829">
    <property type="term" value="C:cytosol"/>
    <property type="evidence" value="ECO:0007669"/>
    <property type="project" value="TreeGrafter"/>
</dbReference>
<dbReference type="GO" id="GO:0042132">
    <property type="term" value="F:fructose 1,6-bisphosphate 1-phosphatase activity"/>
    <property type="evidence" value="ECO:0007669"/>
    <property type="project" value="UniProtKB-UniRule"/>
</dbReference>
<dbReference type="GO" id="GO:0000287">
    <property type="term" value="F:magnesium ion binding"/>
    <property type="evidence" value="ECO:0007669"/>
    <property type="project" value="UniProtKB-UniRule"/>
</dbReference>
<dbReference type="GO" id="GO:0030388">
    <property type="term" value="P:fructose 1,6-bisphosphate metabolic process"/>
    <property type="evidence" value="ECO:0007669"/>
    <property type="project" value="TreeGrafter"/>
</dbReference>
<dbReference type="GO" id="GO:0006002">
    <property type="term" value="P:fructose 6-phosphate metabolic process"/>
    <property type="evidence" value="ECO:0007669"/>
    <property type="project" value="TreeGrafter"/>
</dbReference>
<dbReference type="GO" id="GO:0006000">
    <property type="term" value="P:fructose metabolic process"/>
    <property type="evidence" value="ECO:0007669"/>
    <property type="project" value="TreeGrafter"/>
</dbReference>
<dbReference type="GO" id="GO:0006094">
    <property type="term" value="P:gluconeogenesis"/>
    <property type="evidence" value="ECO:0007669"/>
    <property type="project" value="UniProtKB-UniRule"/>
</dbReference>
<dbReference type="GO" id="GO:0005986">
    <property type="term" value="P:sucrose biosynthetic process"/>
    <property type="evidence" value="ECO:0007669"/>
    <property type="project" value="TreeGrafter"/>
</dbReference>
<dbReference type="CDD" id="cd00354">
    <property type="entry name" value="FBPase"/>
    <property type="match status" value="1"/>
</dbReference>
<dbReference type="FunFam" id="3.30.540.10:FF:000006">
    <property type="entry name" value="Fructose-1,6-bisphosphatase class 1"/>
    <property type="match status" value="1"/>
</dbReference>
<dbReference type="FunFam" id="3.40.190.80:FF:000011">
    <property type="entry name" value="Fructose-1,6-bisphosphatase class 1"/>
    <property type="match status" value="1"/>
</dbReference>
<dbReference type="Gene3D" id="3.40.190.80">
    <property type="match status" value="1"/>
</dbReference>
<dbReference type="Gene3D" id="3.30.540.10">
    <property type="entry name" value="Fructose-1,6-Bisphosphatase, subunit A, domain 1"/>
    <property type="match status" value="1"/>
</dbReference>
<dbReference type="HAMAP" id="MF_01855">
    <property type="entry name" value="FBPase_class1"/>
    <property type="match status" value="1"/>
</dbReference>
<dbReference type="InterPro" id="IPR044015">
    <property type="entry name" value="FBPase_C_dom"/>
</dbReference>
<dbReference type="InterPro" id="IPR000146">
    <property type="entry name" value="FBPase_class-1"/>
</dbReference>
<dbReference type="InterPro" id="IPR033391">
    <property type="entry name" value="FBPase_N"/>
</dbReference>
<dbReference type="InterPro" id="IPR028343">
    <property type="entry name" value="FBPtase"/>
</dbReference>
<dbReference type="NCBIfam" id="NF006779">
    <property type="entry name" value="PRK09293.1-3"/>
    <property type="match status" value="1"/>
</dbReference>
<dbReference type="NCBIfam" id="NF006780">
    <property type="entry name" value="PRK09293.1-4"/>
    <property type="match status" value="1"/>
</dbReference>
<dbReference type="PANTHER" id="PTHR11556">
    <property type="entry name" value="FRUCTOSE-1,6-BISPHOSPHATASE-RELATED"/>
    <property type="match status" value="1"/>
</dbReference>
<dbReference type="PANTHER" id="PTHR11556:SF35">
    <property type="entry name" value="SEDOHEPTULOSE-1,7-BISPHOSPHATASE, CHLOROPLASTIC"/>
    <property type="match status" value="1"/>
</dbReference>
<dbReference type="Pfam" id="PF00316">
    <property type="entry name" value="FBPase"/>
    <property type="match status" value="1"/>
</dbReference>
<dbReference type="Pfam" id="PF18913">
    <property type="entry name" value="FBPase_C"/>
    <property type="match status" value="1"/>
</dbReference>
<dbReference type="PIRSF" id="PIRSF500210">
    <property type="entry name" value="FBPtase"/>
    <property type="match status" value="1"/>
</dbReference>
<dbReference type="PIRSF" id="PIRSF000904">
    <property type="entry name" value="FBPtase_SBPase"/>
    <property type="match status" value="1"/>
</dbReference>
<dbReference type="PRINTS" id="PR00115">
    <property type="entry name" value="F16BPHPHTASE"/>
</dbReference>
<dbReference type="SUPFAM" id="SSF56655">
    <property type="entry name" value="Carbohydrate phosphatase"/>
    <property type="match status" value="1"/>
</dbReference>
<proteinExistence type="inferred from homology"/>
<accession>Q0HRA0</accession>
<protein>
    <recommendedName>
        <fullName evidence="1">Fructose-1,6-bisphosphatase class 1</fullName>
        <shortName evidence="1">FBPase class 1</shortName>
        <ecNumber evidence="1">3.1.3.11</ecNumber>
    </recommendedName>
    <alternativeName>
        <fullName evidence="1">D-fructose-1,6-bisphosphate 1-phosphohydrolase class 1</fullName>
    </alternativeName>
</protein>
<comment type="catalytic activity">
    <reaction evidence="1">
        <text>beta-D-fructose 1,6-bisphosphate + H2O = beta-D-fructose 6-phosphate + phosphate</text>
        <dbReference type="Rhea" id="RHEA:11064"/>
        <dbReference type="ChEBI" id="CHEBI:15377"/>
        <dbReference type="ChEBI" id="CHEBI:32966"/>
        <dbReference type="ChEBI" id="CHEBI:43474"/>
        <dbReference type="ChEBI" id="CHEBI:57634"/>
        <dbReference type="EC" id="3.1.3.11"/>
    </reaction>
</comment>
<comment type="cofactor">
    <cofactor evidence="1">
        <name>Mg(2+)</name>
        <dbReference type="ChEBI" id="CHEBI:18420"/>
    </cofactor>
    <text evidence="1">Binds 2 magnesium ions per subunit.</text>
</comment>
<comment type="pathway">
    <text evidence="1">Carbohydrate biosynthesis; gluconeogenesis.</text>
</comment>
<comment type="subunit">
    <text evidence="1">Homotetramer.</text>
</comment>
<comment type="subcellular location">
    <subcellularLocation>
        <location evidence="1">Cytoplasm</location>
    </subcellularLocation>
</comment>
<comment type="similarity">
    <text evidence="1">Belongs to the FBPase class 1 family.</text>
</comment>
<keyword id="KW-0119">Carbohydrate metabolism</keyword>
<keyword id="KW-0963">Cytoplasm</keyword>
<keyword id="KW-0378">Hydrolase</keyword>
<keyword id="KW-0460">Magnesium</keyword>
<keyword id="KW-0479">Metal-binding</keyword>
<gene>
    <name evidence="1" type="primary">fbp</name>
    <name type="ordered locus">Shewmr7_3373</name>
</gene>
<reference key="1">
    <citation type="submission" date="2006-08" db="EMBL/GenBank/DDBJ databases">
        <title>Complete sequence of chromosome 1 of Shewanella sp. MR-7.</title>
        <authorList>
            <person name="Copeland A."/>
            <person name="Lucas S."/>
            <person name="Lapidus A."/>
            <person name="Barry K."/>
            <person name="Detter J.C."/>
            <person name="Glavina del Rio T."/>
            <person name="Hammon N."/>
            <person name="Israni S."/>
            <person name="Dalin E."/>
            <person name="Tice H."/>
            <person name="Pitluck S."/>
            <person name="Kiss H."/>
            <person name="Brettin T."/>
            <person name="Bruce D."/>
            <person name="Han C."/>
            <person name="Tapia R."/>
            <person name="Gilna P."/>
            <person name="Schmutz J."/>
            <person name="Larimer F."/>
            <person name="Land M."/>
            <person name="Hauser L."/>
            <person name="Kyrpides N."/>
            <person name="Mikhailova N."/>
            <person name="Nealson K."/>
            <person name="Konstantinidis K."/>
            <person name="Klappenbach J."/>
            <person name="Tiedje J."/>
            <person name="Richardson P."/>
        </authorList>
    </citation>
    <scope>NUCLEOTIDE SEQUENCE [LARGE SCALE GENOMIC DNA]</scope>
    <source>
        <strain>MR-7</strain>
    </source>
</reference>
<feature type="chain" id="PRO_0000364713" description="Fructose-1,6-bisphosphatase class 1">
    <location>
        <begin position="1"/>
        <end position="330"/>
    </location>
</feature>
<feature type="binding site" evidence="1">
    <location>
        <position position="84"/>
    </location>
    <ligand>
        <name>Mg(2+)</name>
        <dbReference type="ChEBI" id="CHEBI:18420"/>
        <label>1</label>
    </ligand>
</feature>
<feature type="binding site" evidence="1">
    <location>
        <position position="103"/>
    </location>
    <ligand>
        <name>Mg(2+)</name>
        <dbReference type="ChEBI" id="CHEBI:18420"/>
        <label>1</label>
    </ligand>
</feature>
<feature type="binding site" evidence="1">
    <location>
        <position position="103"/>
    </location>
    <ligand>
        <name>Mg(2+)</name>
        <dbReference type="ChEBI" id="CHEBI:18420"/>
        <label>2</label>
    </ligand>
</feature>
<feature type="binding site" evidence="1">
    <location>
        <position position="105"/>
    </location>
    <ligand>
        <name>Mg(2+)</name>
        <dbReference type="ChEBI" id="CHEBI:18420"/>
        <label>1</label>
    </ligand>
</feature>
<feature type="binding site" evidence="1">
    <location>
        <begin position="106"/>
        <end position="109"/>
    </location>
    <ligand>
        <name>substrate</name>
    </ligand>
</feature>
<feature type="binding site" evidence="1">
    <location>
        <position position="106"/>
    </location>
    <ligand>
        <name>Mg(2+)</name>
        <dbReference type="ChEBI" id="CHEBI:18420"/>
        <label>2</label>
    </ligand>
</feature>
<feature type="binding site" evidence="1">
    <location>
        <position position="196"/>
    </location>
    <ligand>
        <name>substrate</name>
    </ligand>
</feature>
<feature type="binding site" evidence="1">
    <location>
        <position position="262"/>
    </location>
    <ligand>
        <name>substrate</name>
    </ligand>
</feature>
<feature type="binding site" evidence="1">
    <location>
        <position position="268"/>
    </location>
    <ligand>
        <name>Mg(2+)</name>
        <dbReference type="ChEBI" id="CHEBI:18420"/>
        <label>2</label>
    </ligand>
</feature>
<organism>
    <name type="scientific">Shewanella sp. (strain MR-7)</name>
    <dbReference type="NCBI Taxonomy" id="60481"/>
    <lineage>
        <taxon>Bacteria</taxon>
        <taxon>Pseudomonadati</taxon>
        <taxon>Pseudomonadota</taxon>
        <taxon>Gammaproteobacteria</taxon>
        <taxon>Alteromonadales</taxon>
        <taxon>Shewanellaceae</taxon>
        <taxon>Shewanella</taxon>
    </lineage>
</organism>
<name>F16PA_SHESR</name>
<evidence type="ECO:0000255" key="1">
    <source>
        <dbReference type="HAMAP-Rule" id="MF_01855"/>
    </source>
</evidence>